<organism>
    <name type="scientific">Gloeobacter violaceus (strain ATCC 29082 / PCC 7421)</name>
    <dbReference type="NCBI Taxonomy" id="251221"/>
    <lineage>
        <taxon>Bacteria</taxon>
        <taxon>Bacillati</taxon>
        <taxon>Cyanobacteriota</taxon>
        <taxon>Cyanophyceae</taxon>
        <taxon>Gloeobacterales</taxon>
        <taxon>Gloeobacteraceae</taxon>
        <taxon>Gloeobacter</taxon>
    </lineage>
</organism>
<protein>
    <recommendedName>
        <fullName evidence="1">UPF0060 membrane protein glr4174</fullName>
    </recommendedName>
</protein>
<proteinExistence type="inferred from homology"/>
<evidence type="ECO:0000255" key="1">
    <source>
        <dbReference type="HAMAP-Rule" id="MF_00010"/>
    </source>
</evidence>
<gene>
    <name type="ordered locus">glr4174</name>
</gene>
<name>Y4174_GLOVI</name>
<sequence length="107" mass="11416">MALLLFGLAAAAEIGGCFAFWSVLRLGKNPLWLAPGLVSLVVFAWLLTRSEATYAGRAYAAYGGVYIAASLVWLWLVEGTRPDRWDLAGALLCLAGAAVILFADRSP</sequence>
<feature type="chain" id="PRO_0000162332" description="UPF0060 membrane protein glr4174">
    <location>
        <begin position="1"/>
        <end position="107"/>
    </location>
</feature>
<feature type="transmembrane region" description="Helical" evidence="1">
    <location>
        <begin position="1"/>
        <end position="21"/>
    </location>
</feature>
<feature type="transmembrane region" description="Helical" evidence="1">
    <location>
        <begin position="26"/>
        <end position="46"/>
    </location>
</feature>
<feature type="transmembrane region" description="Helical" evidence="1">
    <location>
        <begin position="58"/>
        <end position="78"/>
    </location>
</feature>
<feature type="transmembrane region" description="Helical" evidence="1">
    <location>
        <begin position="87"/>
        <end position="107"/>
    </location>
</feature>
<keyword id="KW-0997">Cell inner membrane</keyword>
<keyword id="KW-1003">Cell membrane</keyword>
<keyword id="KW-0472">Membrane</keyword>
<keyword id="KW-1185">Reference proteome</keyword>
<keyword id="KW-0812">Transmembrane</keyword>
<keyword id="KW-1133">Transmembrane helix</keyword>
<accession>Q7NDQ8</accession>
<comment type="subcellular location">
    <subcellularLocation>
        <location evidence="1">Cell inner membrane</location>
        <topology evidence="1">Multi-pass membrane protein</topology>
    </subcellularLocation>
</comment>
<comment type="similarity">
    <text evidence="1">Belongs to the UPF0060 family.</text>
</comment>
<reference key="1">
    <citation type="journal article" date="2003" name="DNA Res.">
        <title>Complete genome structure of Gloeobacter violaceus PCC 7421, a cyanobacterium that lacks thylakoids.</title>
        <authorList>
            <person name="Nakamura Y."/>
            <person name="Kaneko T."/>
            <person name="Sato S."/>
            <person name="Mimuro M."/>
            <person name="Miyashita H."/>
            <person name="Tsuchiya T."/>
            <person name="Sasamoto S."/>
            <person name="Watanabe A."/>
            <person name="Kawashima K."/>
            <person name="Kishida Y."/>
            <person name="Kiyokawa C."/>
            <person name="Kohara M."/>
            <person name="Matsumoto M."/>
            <person name="Matsuno A."/>
            <person name="Nakazaki N."/>
            <person name="Shimpo S."/>
            <person name="Takeuchi C."/>
            <person name="Yamada M."/>
            <person name="Tabata S."/>
        </authorList>
    </citation>
    <scope>NUCLEOTIDE SEQUENCE [LARGE SCALE GENOMIC DNA]</scope>
    <source>
        <strain>ATCC 29082 / PCC 7421</strain>
    </source>
</reference>
<dbReference type="EMBL" id="BA000045">
    <property type="protein sequence ID" value="BAC92115.1"/>
    <property type="molecule type" value="Genomic_DNA"/>
</dbReference>
<dbReference type="RefSeq" id="NP_927120.1">
    <property type="nucleotide sequence ID" value="NC_005125.1"/>
</dbReference>
<dbReference type="RefSeq" id="WP_011144160.1">
    <property type="nucleotide sequence ID" value="NC_005125.1"/>
</dbReference>
<dbReference type="SMR" id="Q7NDQ8"/>
<dbReference type="STRING" id="251221.gene:10761692"/>
<dbReference type="EnsemblBacteria" id="BAC92115">
    <property type="protein sequence ID" value="BAC92115"/>
    <property type="gene ID" value="BAC92115"/>
</dbReference>
<dbReference type="KEGG" id="gvi:glr4174"/>
<dbReference type="PATRIC" id="fig|251221.4.peg.4207"/>
<dbReference type="eggNOG" id="COG1742">
    <property type="taxonomic scope" value="Bacteria"/>
</dbReference>
<dbReference type="HOGENOM" id="CLU_117653_1_0_3"/>
<dbReference type="InParanoid" id="Q7NDQ8"/>
<dbReference type="OrthoDB" id="123240at2"/>
<dbReference type="Proteomes" id="UP000000557">
    <property type="component" value="Chromosome"/>
</dbReference>
<dbReference type="GO" id="GO:0005886">
    <property type="term" value="C:plasma membrane"/>
    <property type="evidence" value="ECO:0000318"/>
    <property type="project" value="GO_Central"/>
</dbReference>
<dbReference type="HAMAP" id="MF_00010">
    <property type="entry name" value="UPF0060"/>
    <property type="match status" value="1"/>
</dbReference>
<dbReference type="InterPro" id="IPR003844">
    <property type="entry name" value="UPF0060"/>
</dbReference>
<dbReference type="NCBIfam" id="NF002586">
    <property type="entry name" value="PRK02237.1"/>
    <property type="match status" value="1"/>
</dbReference>
<dbReference type="PANTHER" id="PTHR36116">
    <property type="entry name" value="UPF0060 MEMBRANE PROTEIN YNFA"/>
    <property type="match status" value="1"/>
</dbReference>
<dbReference type="PANTHER" id="PTHR36116:SF1">
    <property type="entry name" value="UPF0060 MEMBRANE PROTEIN YNFA"/>
    <property type="match status" value="1"/>
</dbReference>
<dbReference type="Pfam" id="PF02694">
    <property type="entry name" value="UPF0060"/>
    <property type="match status" value="1"/>
</dbReference>
<dbReference type="SUPFAM" id="SSF103481">
    <property type="entry name" value="Multidrug resistance efflux transporter EmrE"/>
    <property type="match status" value="1"/>
</dbReference>